<comment type="function">
    <text evidence="1">Catalyzes carboxymethyl transfer from carboxy-S-adenosyl-L-methionine (Cx-SAM) to 5-hydroxyuridine (ho5U) to form 5-carboxymethoxyuridine (cmo5U) at position 34 in tRNAs.</text>
</comment>
<comment type="catalytic activity">
    <reaction evidence="1">
        <text>carboxy-S-adenosyl-L-methionine + 5-hydroxyuridine(34) in tRNA = 5-carboxymethoxyuridine(34) in tRNA + S-adenosyl-L-homocysteine + H(+)</text>
        <dbReference type="Rhea" id="RHEA:52848"/>
        <dbReference type="Rhea" id="RHEA-COMP:13381"/>
        <dbReference type="Rhea" id="RHEA-COMP:13383"/>
        <dbReference type="ChEBI" id="CHEBI:15378"/>
        <dbReference type="ChEBI" id="CHEBI:57856"/>
        <dbReference type="ChEBI" id="CHEBI:134278"/>
        <dbReference type="ChEBI" id="CHEBI:136877"/>
        <dbReference type="ChEBI" id="CHEBI:136879"/>
    </reaction>
</comment>
<comment type="subunit">
    <text evidence="1">Homotetramer.</text>
</comment>
<comment type="disruption phenotype">
    <text evidence="2">Deletion results in tRNA having 5-hydroxyuridine (ho5U34) instead of cmo5U34.</text>
</comment>
<comment type="similarity">
    <text evidence="1">Belongs to the class I-like SAM-binding methyltransferase superfamily. CmoB family.</text>
</comment>
<evidence type="ECO:0000255" key="1">
    <source>
        <dbReference type="HAMAP-Rule" id="MF_01590"/>
    </source>
</evidence>
<evidence type="ECO:0000269" key="2">
    <source>
    </source>
</evidence>
<evidence type="ECO:0000303" key="3">
    <source>
    </source>
</evidence>
<protein>
    <recommendedName>
        <fullName evidence="1">tRNA U34 carboxymethyltransferase</fullName>
        <ecNumber evidence="1">2.5.1.-</ecNumber>
    </recommendedName>
</protein>
<organism>
    <name type="scientific">Salmonella typhimurium (strain LT2 / SGSC1412 / ATCC 700720)</name>
    <dbReference type="NCBI Taxonomy" id="99287"/>
    <lineage>
        <taxon>Bacteria</taxon>
        <taxon>Pseudomonadati</taxon>
        <taxon>Pseudomonadota</taxon>
        <taxon>Gammaproteobacteria</taxon>
        <taxon>Enterobacterales</taxon>
        <taxon>Enterobacteriaceae</taxon>
        <taxon>Salmonella</taxon>
    </lineage>
</organism>
<reference key="1">
    <citation type="journal article" date="2001" name="Nature">
        <title>Complete genome sequence of Salmonella enterica serovar Typhimurium LT2.</title>
        <authorList>
            <person name="McClelland M."/>
            <person name="Sanderson K.E."/>
            <person name="Spieth J."/>
            <person name="Clifton S.W."/>
            <person name="Latreille P."/>
            <person name="Courtney L."/>
            <person name="Porwollik S."/>
            <person name="Ali J."/>
            <person name="Dante M."/>
            <person name="Du F."/>
            <person name="Hou S."/>
            <person name="Layman D."/>
            <person name="Leonard S."/>
            <person name="Nguyen C."/>
            <person name="Scott K."/>
            <person name="Holmes A."/>
            <person name="Grewal N."/>
            <person name="Mulvaney E."/>
            <person name="Ryan E."/>
            <person name="Sun H."/>
            <person name="Florea L."/>
            <person name="Miller W."/>
            <person name="Stoneking T."/>
            <person name="Nhan M."/>
            <person name="Waterston R."/>
            <person name="Wilson R.K."/>
        </authorList>
    </citation>
    <scope>NUCLEOTIDE SEQUENCE [LARGE SCALE GENOMIC DNA]</scope>
    <source>
        <strain>LT2 / SGSC1412 / ATCC 700720</strain>
    </source>
</reference>
<reference key="2">
    <citation type="journal article" date="2004" name="RNA">
        <title>The modified wobble nucleoside uridine-5-oxyacetic acid in tRNAPro(cmo5UGG) promotes reading of all four proline codons in vivo.</title>
        <authorList>
            <person name="Naesvall S.J."/>
            <person name="Chen P."/>
            <person name="Bjoerk G.R."/>
        </authorList>
    </citation>
    <scope>DISRUPTION PHENOTYPE</scope>
    <source>
        <strain>LT2</strain>
    </source>
</reference>
<sequence length="323" mass="37111">MIEFGNFYQLIAKNHLSHWLETLPAQIASWQREQQHGLFKQWSNAVEFLPEMTPWRLDLLHSVTAESETPLSEGQLKRIDTLLRNLMPWRKGPFSLYGVDIDTEWRSDWKWDRVLPHLSDLTGRTILDVGCGSGYHLWRMIGAGAHLAVGIDPTQLFLCQFEAVRKLLGNDQRAHLLPLGIEQLPALKAFDTVFSMGVLYHRRSPLEHLWQLKDQLVNEGELVLETLVIDGDENTVLVPGDRYAQMRNVYFIPSAPALKKWLEKCGFIDVRIADVCVTTTEEQRRTEWMVTESLADFLDPNDRSKTVEGYPAPQRAVLIARKP</sequence>
<keyword id="KW-1185">Reference proteome</keyword>
<keyword id="KW-0808">Transferase</keyword>
<keyword id="KW-0819">tRNA processing</keyword>
<accession>Q8ZNV1</accession>
<gene>
    <name evidence="1 3" type="primary">cmoB</name>
    <name type="ordered locus">STM1906</name>
</gene>
<feature type="chain" id="PRO_0000313962" description="tRNA U34 carboxymethyltransferase">
    <location>
        <begin position="1"/>
        <end position="323"/>
    </location>
</feature>
<feature type="binding site" evidence="1">
    <location>
        <position position="91"/>
    </location>
    <ligand>
        <name>carboxy-S-adenosyl-L-methionine</name>
        <dbReference type="ChEBI" id="CHEBI:134278"/>
    </ligand>
</feature>
<feature type="binding site" evidence="1">
    <location>
        <position position="105"/>
    </location>
    <ligand>
        <name>carboxy-S-adenosyl-L-methionine</name>
        <dbReference type="ChEBI" id="CHEBI:134278"/>
    </ligand>
</feature>
<feature type="binding site" evidence="1">
    <location>
        <position position="110"/>
    </location>
    <ligand>
        <name>carboxy-S-adenosyl-L-methionine</name>
        <dbReference type="ChEBI" id="CHEBI:134278"/>
    </ligand>
</feature>
<feature type="binding site" evidence="1">
    <location>
        <position position="130"/>
    </location>
    <ligand>
        <name>carboxy-S-adenosyl-L-methionine</name>
        <dbReference type="ChEBI" id="CHEBI:134278"/>
    </ligand>
</feature>
<feature type="binding site" evidence="1">
    <location>
        <begin position="152"/>
        <end position="154"/>
    </location>
    <ligand>
        <name>carboxy-S-adenosyl-L-methionine</name>
        <dbReference type="ChEBI" id="CHEBI:134278"/>
    </ligand>
</feature>
<feature type="binding site" evidence="1">
    <location>
        <begin position="181"/>
        <end position="182"/>
    </location>
    <ligand>
        <name>carboxy-S-adenosyl-L-methionine</name>
        <dbReference type="ChEBI" id="CHEBI:134278"/>
    </ligand>
</feature>
<feature type="binding site" evidence="1">
    <location>
        <position position="196"/>
    </location>
    <ligand>
        <name>carboxy-S-adenosyl-L-methionine</name>
        <dbReference type="ChEBI" id="CHEBI:134278"/>
    </ligand>
</feature>
<feature type="binding site" evidence="1">
    <location>
        <position position="200"/>
    </location>
    <ligand>
        <name>carboxy-S-adenosyl-L-methionine</name>
        <dbReference type="ChEBI" id="CHEBI:134278"/>
    </ligand>
</feature>
<feature type="binding site" evidence="1">
    <location>
        <position position="315"/>
    </location>
    <ligand>
        <name>carboxy-S-adenosyl-L-methionine</name>
        <dbReference type="ChEBI" id="CHEBI:134278"/>
    </ligand>
</feature>
<proteinExistence type="inferred from homology"/>
<dbReference type="EC" id="2.5.1.-" evidence="1"/>
<dbReference type="EMBL" id="AE006468">
    <property type="protein sequence ID" value="AAL20822.1"/>
    <property type="molecule type" value="Genomic_DNA"/>
</dbReference>
<dbReference type="RefSeq" id="WP_000569041.1">
    <property type="nucleotide sequence ID" value="NC_003197.2"/>
</dbReference>
<dbReference type="SMR" id="Q8ZNV1"/>
<dbReference type="STRING" id="99287.STM1906"/>
<dbReference type="PaxDb" id="99287-STM1906"/>
<dbReference type="DNASU" id="1253427"/>
<dbReference type="KEGG" id="stm:STM1906"/>
<dbReference type="PATRIC" id="fig|99287.12.peg.2021"/>
<dbReference type="HOGENOM" id="CLU_052665_0_0_6"/>
<dbReference type="OMA" id="CEWRSDF"/>
<dbReference type="PhylomeDB" id="Q8ZNV1"/>
<dbReference type="BioCyc" id="SENT99287:STM1906-MONOMER"/>
<dbReference type="Proteomes" id="UP000001014">
    <property type="component" value="Chromosome"/>
</dbReference>
<dbReference type="GO" id="GO:0008168">
    <property type="term" value="F:methyltransferase activity"/>
    <property type="evidence" value="ECO:0000318"/>
    <property type="project" value="GO_Central"/>
</dbReference>
<dbReference type="GO" id="GO:0016765">
    <property type="term" value="F:transferase activity, transferring alkyl or aryl (other than methyl) groups"/>
    <property type="evidence" value="ECO:0007669"/>
    <property type="project" value="UniProtKB-UniRule"/>
</dbReference>
<dbReference type="GO" id="GO:0002098">
    <property type="term" value="P:tRNA wobble uridine modification"/>
    <property type="evidence" value="ECO:0007669"/>
    <property type="project" value="InterPro"/>
</dbReference>
<dbReference type="CDD" id="cd02440">
    <property type="entry name" value="AdoMet_MTases"/>
    <property type="match status" value="1"/>
</dbReference>
<dbReference type="FunFam" id="3.40.50.150:FF:000080">
    <property type="entry name" value="tRNA U34 carboxymethyltransferase"/>
    <property type="match status" value="1"/>
</dbReference>
<dbReference type="Gene3D" id="3.40.50.150">
    <property type="entry name" value="Vaccinia Virus protein VP39"/>
    <property type="match status" value="1"/>
</dbReference>
<dbReference type="HAMAP" id="MF_01590">
    <property type="entry name" value="tRNA_carboxymethyltr_CmoB"/>
    <property type="match status" value="1"/>
</dbReference>
<dbReference type="InterPro" id="IPR010017">
    <property type="entry name" value="CmoB"/>
</dbReference>
<dbReference type="InterPro" id="IPR027555">
    <property type="entry name" value="Mo5U34_MeTrfas-like"/>
</dbReference>
<dbReference type="InterPro" id="IPR029063">
    <property type="entry name" value="SAM-dependent_MTases_sf"/>
</dbReference>
<dbReference type="NCBIfam" id="NF011650">
    <property type="entry name" value="PRK15068.1"/>
    <property type="match status" value="1"/>
</dbReference>
<dbReference type="NCBIfam" id="TIGR00452">
    <property type="entry name" value="tRNA 5-methoxyuridine(34)/uridine 5-oxyacetic acid(34) synthase CmoB"/>
    <property type="match status" value="1"/>
</dbReference>
<dbReference type="PANTHER" id="PTHR43464">
    <property type="entry name" value="METHYLTRANSFERASE"/>
    <property type="match status" value="1"/>
</dbReference>
<dbReference type="PANTHER" id="PTHR43464:SF95">
    <property type="entry name" value="TRNA U34 CARBOXYMETHYLTRANSFERASE"/>
    <property type="match status" value="1"/>
</dbReference>
<dbReference type="Pfam" id="PF08003">
    <property type="entry name" value="Methyltransf_9"/>
    <property type="match status" value="1"/>
</dbReference>
<dbReference type="SUPFAM" id="SSF53335">
    <property type="entry name" value="S-adenosyl-L-methionine-dependent methyltransferases"/>
    <property type="match status" value="1"/>
</dbReference>
<name>CMOB_SALTY</name>